<accession>C4ZYE1</accession>
<sequence>MALLPDKEKLLRNFLRCANWEEKYLYIIELGQRLPELRDEDRSPQNSIQGCQSQVWIVMRQNAQGIIELQGDSDAAIVKGLIAVVFILYDQMTPQDIVNFDVRPWFEKMALTQHLTPSRSQGLEAMIRAIRAKAAALS</sequence>
<gene>
    <name evidence="1" type="primary">sufE</name>
    <name type="ordered locus">BWG_1493</name>
</gene>
<name>SUFE_ECOBW</name>
<proteinExistence type="inferred from homology"/>
<keyword id="KW-0963">Cytoplasm</keyword>
<comment type="function">
    <text evidence="1">Participates in cysteine desulfuration mediated by SufS. Cysteine desulfuration mobilizes sulfur from L-cysteine to yield L-alanine and constitutes an essential step in sulfur metabolism for biosynthesis of a variety of sulfur-containing biomolecules. Functions as a sulfur acceptor for SufS, by mediating the direct transfer of the sulfur atom from the S-sulfanylcysteine of SufS, an intermediate product of cysteine desulfuration process.</text>
</comment>
<comment type="pathway">
    <text evidence="1">Cofactor biosynthesis; iron-sulfur cluster biosynthesis.</text>
</comment>
<comment type="subunit">
    <text evidence="1">Homodimer. Interacts with SufS.</text>
</comment>
<comment type="subcellular location">
    <subcellularLocation>
        <location evidence="1">Cytoplasm</location>
    </subcellularLocation>
</comment>
<comment type="similarity">
    <text evidence="1">Belongs to the SufE family.</text>
</comment>
<protein>
    <recommendedName>
        <fullName evidence="1">Cysteine desulfuration protein SufE</fullName>
    </recommendedName>
</protein>
<feature type="chain" id="PRO_1000216077" description="Cysteine desulfuration protein SufE">
    <location>
        <begin position="1"/>
        <end position="138"/>
    </location>
</feature>
<feature type="active site" description="Cysteine persulfide intermediate" evidence="1">
    <location>
        <position position="51"/>
    </location>
</feature>
<dbReference type="EMBL" id="CP001396">
    <property type="protein sequence ID" value="ACR65604.1"/>
    <property type="molecule type" value="Genomic_DNA"/>
</dbReference>
<dbReference type="RefSeq" id="WP_001196530.1">
    <property type="nucleotide sequence ID" value="NC_012759.1"/>
</dbReference>
<dbReference type="SMR" id="C4ZYE1"/>
<dbReference type="KEGG" id="ebw:BWG_1493"/>
<dbReference type="HOGENOM" id="CLU_124502_1_1_6"/>
<dbReference type="UniPathway" id="UPA00266"/>
<dbReference type="GO" id="GO:0005737">
    <property type="term" value="C:cytoplasm"/>
    <property type="evidence" value="ECO:0007669"/>
    <property type="project" value="UniProtKB-SubCell"/>
</dbReference>
<dbReference type="GO" id="GO:0016226">
    <property type="term" value="P:iron-sulfur cluster assembly"/>
    <property type="evidence" value="ECO:0007669"/>
    <property type="project" value="InterPro"/>
</dbReference>
<dbReference type="GO" id="GO:0006790">
    <property type="term" value="P:sulfur compound metabolic process"/>
    <property type="evidence" value="ECO:0007669"/>
    <property type="project" value="InterPro"/>
</dbReference>
<dbReference type="FunFam" id="3.90.1010.10:FF:000004">
    <property type="entry name" value="Cysteine desulfuration protein SufE"/>
    <property type="match status" value="1"/>
</dbReference>
<dbReference type="Gene3D" id="3.90.1010.10">
    <property type="match status" value="1"/>
</dbReference>
<dbReference type="HAMAP" id="MF_01832">
    <property type="entry name" value="SufE"/>
    <property type="match status" value="1"/>
</dbReference>
<dbReference type="InterPro" id="IPR023939">
    <property type="entry name" value="Cysteine_desulfuration_SufE"/>
</dbReference>
<dbReference type="InterPro" id="IPR003808">
    <property type="entry name" value="Fe-S_metab-assoc_dom"/>
</dbReference>
<dbReference type="NCBIfam" id="NF006792">
    <property type="entry name" value="PRK09296.1"/>
    <property type="match status" value="1"/>
</dbReference>
<dbReference type="PANTHER" id="PTHR43597:SF3">
    <property type="entry name" value="CYSTEINE DESULFURATION PROTEIN SUFE"/>
    <property type="match status" value="1"/>
</dbReference>
<dbReference type="PANTHER" id="PTHR43597">
    <property type="entry name" value="SULFUR ACCEPTOR PROTEIN CSDE"/>
    <property type="match status" value="1"/>
</dbReference>
<dbReference type="Pfam" id="PF02657">
    <property type="entry name" value="SufE"/>
    <property type="match status" value="1"/>
</dbReference>
<dbReference type="SUPFAM" id="SSF82649">
    <property type="entry name" value="SufE/NifU"/>
    <property type="match status" value="1"/>
</dbReference>
<reference key="1">
    <citation type="journal article" date="2009" name="J. Bacteriol.">
        <title>Genomic sequencing reveals regulatory mutations and recombinational events in the widely used MC4100 lineage of Escherichia coli K-12.</title>
        <authorList>
            <person name="Ferenci T."/>
            <person name="Zhou Z."/>
            <person name="Betteridge T."/>
            <person name="Ren Y."/>
            <person name="Liu Y."/>
            <person name="Feng L."/>
            <person name="Reeves P.R."/>
            <person name="Wang L."/>
        </authorList>
    </citation>
    <scope>NUCLEOTIDE SEQUENCE [LARGE SCALE GENOMIC DNA]</scope>
    <source>
        <strain>K12 / MC4100 / BW2952</strain>
    </source>
</reference>
<evidence type="ECO:0000255" key="1">
    <source>
        <dbReference type="HAMAP-Rule" id="MF_01832"/>
    </source>
</evidence>
<organism>
    <name type="scientific">Escherichia coli (strain K12 / MC4100 / BW2952)</name>
    <dbReference type="NCBI Taxonomy" id="595496"/>
    <lineage>
        <taxon>Bacteria</taxon>
        <taxon>Pseudomonadati</taxon>
        <taxon>Pseudomonadota</taxon>
        <taxon>Gammaproteobacteria</taxon>
        <taxon>Enterobacterales</taxon>
        <taxon>Enterobacteriaceae</taxon>
        <taxon>Escherichia</taxon>
    </lineage>
</organism>